<protein>
    <recommendedName>
        <fullName>Protein 3</fullName>
    </recommendedName>
    <alternativeName>
        <fullName>Accessory protein 3</fullName>
    </alternativeName>
</protein>
<organismHost>
    <name type="scientific">Rhinolophus sinicus</name>
    <name type="common">Chinese rufous horseshoe bat</name>
    <dbReference type="NCBI Taxonomy" id="89399"/>
</organismHost>
<feature type="chain" id="PRO_0000291328" description="Protein 3">
    <location>
        <begin position="1"/>
        <end position="274"/>
    </location>
</feature>
<feature type="topological domain" description="Extracellular" evidence="1">
    <location>
        <begin position="1"/>
        <end position="34"/>
    </location>
</feature>
<feature type="transmembrane region" description="Helical" evidence="2">
    <location>
        <begin position="35"/>
        <end position="55"/>
    </location>
</feature>
<feature type="topological domain" description="Cytoplasmic" evidence="2">
    <location>
        <begin position="56"/>
        <end position="78"/>
    </location>
</feature>
<feature type="transmembrane region" description="Helical" evidence="2">
    <location>
        <begin position="79"/>
        <end position="99"/>
    </location>
</feature>
<feature type="topological domain" description="Extracellular" evidence="2">
    <location>
        <begin position="100"/>
        <end position="104"/>
    </location>
</feature>
<feature type="transmembrane region" description="Helical" evidence="2">
    <location>
        <begin position="105"/>
        <end position="125"/>
    </location>
</feature>
<feature type="topological domain" description="Cytoplasmic" evidence="1">
    <location>
        <begin position="126"/>
        <end position="274"/>
    </location>
</feature>
<feature type="domain" description="CoV 3a-like viroporin TM" evidence="3">
    <location>
        <begin position="33"/>
        <end position="141"/>
    </location>
</feature>
<feature type="domain" description="CoV 3a-like viroporin CD" evidence="4">
    <location>
        <begin position="145"/>
        <end position="237"/>
    </location>
</feature>
<feature type="site" description="Involved in polymerization" evidence="1">
    <location>
        <position position="133"/>
    </location>
</feature>
<feature type="glycosylation site" description="O-linked (GalNAc...) serine; by host" evidence="2">
    <location>
        <position position="27"/>
    </location>
</feature>
<feature type="glycosylation site" description="O-linked (GalNAc...) threonine; by host" evidence="1">
    <location>
        <position position="28"/>
    </location>
</feature>
<feature type="glycosylation site" description="O-linked (GalNAc...) threonine; by host" evidence="1">
    <location>
        <position position="32"/>
    </location>
</feature>
<feature type="glycosylation site" description="O-linked (GalNAc...) threonine; by host" evidence="2">
    <location>
        <position position="34"/>
    </location>
</feature>
<comment type="function">
    <text evidence="1">Forms homotetrameric potassium sensitive ion channels (viroporin) and may modulate virus release. Up-regulates expression of fibrinogen subunits FGA, FGB and FGG in host lung epithelial cells. Induces apoptosis in cell culture. Down-regulates the type 1 interferon receptor by inducing serine phosphorylation within the IFN alpha-receptor subunit 1 (IFNAR1) degradation motif and increasing IFNAR1 ubiquitination (By similarity).</text>
</comment>
<comment type="subunit">
    <text evidence="1">Homotetramer composed of two homodimers linked non covalently. Interacts with M, S and E proteins. Also interacts with the accessory protein 7a (By similarity).</text>
</comment>
<comment type="subcellular location">
    <subcellularLocation>
        <location evidence="1">Virion</location>
    </subcellularLocation>
    <subcellularLocation>
        <location evidence="1">Host Golgi apparatus membrane</location>
        <topology evidence="1">Multi-pass membrane protein</topology>
    </subcellularLocation>
    <subcellularLocation>
        <location evidence="1">Host cell membrane</location>
        <topology evidence="1">Multi-pass membrane protein</topology>
    </subcellularLocation>
    <subcellularLocation>
        <location evidence="1">Secreted</location>
    </subcellularLocation>
    <subcellularLocation>
        <location evidence="1">Host cytoplasm</location>
    </subcellularLocation>
    <text evidence="1">The cell surface expressed protein can undergo endocytosis. The protein is secreted in association with membranous structures (By similarity).</text>
</comment>
<comment type="domain">
    <text evidence="1">The second or the third transmembrane region are responsible for Golgi localization.</text>
</comment>
<comment type="PTM">
    <text evidence="1">Exists in both O-glycosylated and non-glycosylated forms. The glycosylated form is associated with the virion (By similarity).</text>
</comment>
<comment type="miscellaneous">
    <text>Bat coronavirus HKU3 is highly similar to SARS-CoV (SARS-like).</text>
</comment>
<evidence type="ECO:0000250" key="1"/>
<evidence type="ECO:0000255" key="2"/>
<evidence type="ECO:0000255" key="3">
    <source>
        <dbReference type="PROSITE-ProRule" id="PRU01311"/>
    </source>
</evidence>
<evidence type="ECO:0000255" key="4">
    <source>
        <dbReference type="PROSITE-ProRule" id="PRU01312"/>
    </source>
</evidence>
<organism>
    <name type="scientific">Bat coronavirus HKU3</name>
    <name type="common">BtCoV</name>
    <name type="synonym">SARS-like coronavirus HKU3</name>
    <dbReference type="NCBI Taxonomy" id="442736"/>
    <lineage>
        <taxon>Viruses</taxon>
        <taxon>Riboviria</taxon>
        <taxon>Orthornavirae</taxon>
        <taxon>Pisuviricota</taxon>
        <taxon>Pisoniviricetes</taxon>
        <taxon>Nidovirales</taxon>
        <taxon>Cornidovirineae</taxon>
        <taxon>Coronaviridae</taxon>
        <taxon>Orthocoronavirinae</taxon>
        <taxon>Betacoronavirus</taxon>
        <taxon>Sarbecovirus</taxon>
        <taxon>Severe acute respiratory syndrome coronavirus</taxon>
    </lineage>
</organism>
<accession>Q3LZX0</accession>
<proteinExistence type="inferred from homology"/>
<dbReference type="EMBL" id="DQ022305">
    <property type="protein sequence ID" value="AAY88867.1"/>
    <property type="molecule type" value="Genomic_RNA"/>
</dbReference>
<dbReference type="SMR" id="Q3LZX0"/>
<dbReference type="Proteomes" id="UP000007450">
    <property type="component" value="Segment"/>
</dbReference>
<dbReference type="GO" id="GO:0005576">
    <property type="term" value="C:extracellular region"/>
    <property type="evidence" value="ECO:0007669"/>
    <property type="project" value="UniProtKB-SubCell"/>
</dbReference>
<dbReference type="GO" id="GO:0044178">
    <property type="term" value="C:host cell Golgi membrane"/>
    <property type="evidence" value="ECO:0007669"/>
    <property type="project" value="UniProtKB-SubCell"/>
</dbReference>
<dbReference type="GO" id="GO:0020002">
    <property type="term" value="C:host cell plasma membrane"/>
    <property type="evidence" value="ECO:0007669"/>
    <property type="project" value="UniProtKB-SubCell"/>
</dbReference>
<dbReference type="GO" id="GO:0016020">
    <property type="term" value="C:membrane"/>
    <property type="evidence" value="ECO:0007669"/>
    <property type="project" value="UniProtKB-KW"/>
</dbReference>
<dbReference type="GO" id="GO:0044423">
    <property type="term" value="C:virion component"/>
    <property type="evidence" value="ECO:0007669"/>
    <property type="project" value="UniProtKB-KW"/>
</dbReference>
<dbReference type="GO" id="GO:0005216">
    <property type="term" value="F:monoatomic ion channel activity"/>
    <property type="evidence" value="ECO:0007669"/>
    <property type="project" value="InterPro"/>
</dbReference>
<dbReference type="CDD" id="cd21648">
    <property type="entry name" value="SARS-CoV-like_ORF3a"/>
    <property type="match status" value="1"/>
</dbReference>
<dbReference type="InterPro" id="IPR046446">
    <property type="entry name" value="a/bCoV_VIROPORIN_3A-like_CD"/>
</dbReference>
<dbReference type="InterPro" id="IPR046445">
    <property type="entry name" value="a/bCoV_VIROPORIN_3A-like_TM"/>
</dbReference>
<dbReference type="InterPro" id="IPR024407">
    <property type="entry name" value="Protein_3a_bCoV"/>
</dbReference>
<dbReference type="Pfam" id="PF11289">
    <property type="entry name" value="bCoV_viroporin"/>
    <property type="match status" value="1"/>
</dbReference>
<dbReference type="PROSITE" id="PS51967">
    <property type="entry name" value="COV_VIROPORIN_3A_CD"/>
    <property type="match status" value="1"/>
</dbReference>
<dbReference type="PROSITE" id="PS51966">
    <property type="entry name" value="COV_VIROPORIN_3A_TM"/>
    <property type="match status" value="1"/>
</dbReference>
<reference key="1">
    <citation type="journal article" date="2005" name="Proc. Natl. Acad. Sci. U.S.A.">
        <title>Severe acute respiratory syndrome coronavirus-like virus in Chinese horseshoe bats.</title>
        <authorList>
            <person name="Lau S.K.P."/>
            <person name="Woo P.C.Y."/>
            <person name="Li K.S.M."/>
            <person name="Huang Y."/>
            <person name="Tsoi H.-W."/>
            <person name="Wong B.H.L."/>
            <person name="Wong S.S.Y."/>
            <person name="Leung S.-Y."/>
            <person name="Chan K.-H."/>
            <person name="Yuen K.-Y."/>
        </authorList>
    </citation>
    <scope>NUCLEOTIDE SEQUENCE [GENOMIC RNA]</scope>
    <source>
        <strain>Isolate HKU3-1</strain>
    </source>
</reference>
<keyword id="KW-0053">Apoptosis</keyword>
<keyword id="KW-0325">Glycoprotein</keyword>
<keyword id="KW-1032">Host cell membrane</keyword>
<keyword id="KW-1035">Host cytoplasm</keyword>
<keyword id="KW-1040">Host Golgi apparatus</keyword>
<keyword id="KW-1043">Host membrane</keyword>
<keyword id="KW-0407">Ion channel</keyword>
<keyword id="KW-0406">Ion transport</keyword>
<keyword id="KW-0472">Membrane</keyword>
<keyword id="KW-0964">Secreted</keyword>
<keyword id="KW-0812">Transmembrane</keyword>
<keyword id="KW-1133">Transmembrane helix</keyword>
<keyword id="KW-0813">Transport</keyword>
<keyword id="KW-1182">Viral ion channel</keyword>
<keyword id="KW-0946">Virion</keyword>
<sequence length="274" mass="30984">MDLFMSIFTLGAITRNPAKIENASPASTVHATATIPLQATFPFGWLIVGVALLAVFQSASKVIALHRRWQLALYKGVQLVCNMLLLFVTIYSHLLLLAACMEAQFLYIYALIYILQIVSFCRFIMRCWLCWKCRSKNPLLYDANYFVCWHTNNYDYCIPYNSVTDTVVITSGDGTNQPKLKEDYQIGGYSEDWHSGVKDYVVIYGYFTEVYYQLESTQLSTDTGAENATFFIYSKLVKDVDHVQIHTIDGSSGVVNPAMDPIYDEPTTTTSVPL</sequence>
<name>AP3A_BCHK3</name>
<gene>
    <name type="ORF">3</name>
</gene>